<evidence type="ECO:0000250" key="1">
    <source>
        <dbReference type="UniProtKB" id="Q6UX52"/>
    </source>
</evidence>
<evidence type="ECO:0000255" key="2"/>
<evidence type="ECO:0000269" key="3">
    <source>
    </source>
</evidence>
<evidence type="ECO:0000303" key="4">
    <source>
    </source>
</evidence>
<evidence type="ECO:0000305" key="5"/>
<keyword id="KW-1064">Adaptive immunity</keyword>
<keyword id="KW-0202">Cytokine</keyword>
<keyword id="KW-0325">Glycoprotein</keyword>
<keyword id="KW-0391">Immunity</keyword>
<keyword id="KW-1185">Reference proteome</keyword>
<keyword id="KW-0964">Secreted</keyword>
<keyword id="KW-0732">Signal</keyword>
<dbReference type="EMBL" id="AK020081">
    <property type="protein sequence ID" value="BAB31985.1"/>
    <property type="molecule type" value="mRNA"/>
</dbReference>
<dbReference type="EMBL" id="AL645856">
    <property type="status" value="NOT_ANNOTATED_CDS"/>
    <property type="molecule type" value="Genomic_DNA"/>
</dbReference>
<dbReference type="CCDS" id="CCDS48992.1"/>
<dbReference type="RefSeq" id="NP_084240.1">
    <property type="nucleotide sequence ID" value="NM_029964.1"/>
</dbReference>
<dbReference type="FunCoup" id="Q9CX63">
    <property type="interactions" value="257"/>
</dbReference>
<dbReference type="GlyGen" id="Q9CX63">
    <property type="glycosylation" value="3 sites"/>
</dbReference>
<dbReference type="iPTMnet" id="Q9CX63"/>
<dbReference type="PhosphoSitePlus" id="Q9CX63"/>
<dbReference type="PaxDb" id="10090-ENSMUSP00000101938"/>
<dbReference type="Antibodypedia" id="32542">
    <property type="antibodies" value="23 antibodies from 11 providers"/>
</dbReference>
<dbReference type="Ensembl" id="ENSMUST00000106331.2">
    <property type="protein sequence ID" value="ENSMUSP00000101938.2"/>
    <property type="gene ID" value="ENSMUSG00000025573.5"/>
</dbReference>
<dbReference type="GeneID" id="77727"/>
<dbReference type="KEGG" id="mmu:77727"/>
<dbReference type="UCSC" id="uc007mnv.2">
    <property type="organism name" value="mouse"/>
</dbReference>
<dbReference type="AGR" id="MGI:1924977"/>
<dbReference type="MGI" id="MGI:1924977">
    <property type="gene designation" value="6030468B19Rik"/>
</dbReference>
<dbReference type="VEuPathDB" id="HostDB:ENSMUSG00000025573"/>
<dbReference type="eggNOG" id="ENOG502SPUE">
    <property type="taxonomic scope" value="Eukaryota"/>
</dbReference>
<dbReference type="GeneTree" id="ENSGT01120000271918"/>
<dbReference type="HOGENOM" id="CLU_096525_0_0_1"/>
<dbReference type="InParanoid" id="Q9CX63"/>
<dbReference type="OMA" id="AEMSCWA"/>
<dbReference type="OrthoDB" id="9524734at2759"/>
<dbReference type="PhylomeDB" id="Q9CX63"/>
<dbReference type="TreeFam" id="TF337680"/>
<dbReference type="BioGRID-ORCS" id="77727">
    <property type="hits" value="2 hits in 80 CRISPR screens"/>
</dbReference>
<dbReference type="PRO" id="PR:Q9CX63"/>
<dbReference type="Proteomes" id="UP000000589">
    <property type="component" value="Chromosome 11"/>
</dbReference>
<dbReference type="RNAct" id="Q9CX63">
    <property type="molecule type" value="protein"/>
</dbReference>
<dbReference type="Bgee" id="ENSMUSG00000025573">
    <property type="expression patterns" value="Expressed in mesodermal cell in embryo and 20 other cell types or tissues"/>
</dbReference>
<dbReference type="GO" id="GO:0005615">
    <property type="term" value="C:extracellular space"/>
    <property type="evidence" value="ECO:0000250"/>
    <property type="project" value="UniProtKB"/>
</dbReference>
<dbReference type="GO" id="GO:0005125">
    <property type="term" value="F:cytokine activity"/>
    <property type="evidence" value="ECO:0007669"/>
    <property type="project" value="UniProtKB-KW"/>
</dbReference>
<dbReference type="GO" id="GO:0002250">
    <property type="term" value="P:adaptive immune response"/>
    <property type="evidence" value="ECO:0007669"/>
    <property type="project" value="UniProtKB-KW"/>
</dbReference>
<dbReference type="GO" id="GO:0002313">
    <property type="term" value="P:mature B cell differentiation involved in immune response"/>
    <property type="evidence" value="ECO:0000315"/>
    <property type="project" value="UniProtKB"/>
</dbReference>
<dbReference type="GO" id="GO:2000558">
    <property type="term" value="P:positive regulation of immunoglobulin production in mucosal tissue"/>
    <property type="evidence" value="ECO:0000315"/>
    <property type="project" value="UniProtKB"/>
</dbReference>
<dbReference type="Gene3D" id="2.60.40.10">
    <property type="entry name" value="Immunoglobulins"/>
    <property type="match status" value="1"/>
</dbReference>
<dbReference type="InterPro" id="IPR036179">
    <property type="entry name" value="Ig-like_dom_sf"/>
</dbReference>
<dbReference type="InterPro" id="IPR013783">
    <property type="entry name" value="Ig-like_fold"/>
</dbReference>
<dbReference type="InterPro" id="IPR040878">
    <property type="entry name" value="IL-40-like_Ig"/>
</dbReference>
<dbReference type="Pfam" id="PF17736">
    <property type="entry name" value="Ig_C17orf99"/>
    <property type="match status" value="2"/>
</dbReference>
<dbReference type="SUPFAM" id="SSF48726">
    <property type="entry name" value="Immunoglobulin"/>
    <property type="match status" value="1"/>
</dbReference>
<reference key="1">
    <citation type="journal article" date="2005" name="Science">
        <title>The transcriptional landscape of the mammalian genome.</title>
        <authorList>
            <person name="Carninci P."/>
            <person name="Kasukawa T."/>
            <person name="Katayama S."/>
            <person name="Gough J."/>
            <person name="Frith M.C."/>
            <person name="Maeda N."/>
            <person name="Oyama R."/>
            <person name="Ravasi T."/>
            <person name="Lenhard B."/>
            <person name="Wells C."/>
            <person name="Kodzius R."/>
            <person name="Shimokawa K."/>
            <person name="Bajic V.B."/>
            <person name="Brenner S.E."/>
            <person name="Batalov S."/>
            <person name="Forrest A.R."/>
            <person name="Zavolan M."/>
            <person name="Davis M.J."/>
            <person name="Wilming L.G."/>
            <person name="Aidinis V."/>
            <person name="Allen J.E."/>
            <person name="Ambesi-Impiombato A."/>
            <person name="Apweiler R."/>
            <person name="Aturaliya R.N."/>
            <person name="Bailey T.L."/>
            <person name="Bansal M."/>
            <person name="Baxter L."/>
            <person name="Beisel K.W."/>
            <person name="Bersano T."/>
            <person name="Bono H."/>
            <person name="Chalk A.M."/>
            <person name="Chiu K.P."/>
            <person name="Choudhary V."/>
            <person name="Christoffels A."/>
            <person name="Clutterbuck D.R."/>
            <person name="Crowe M.L."/>
            <person name="Dalla E."/>
            <person name="Dalrymple B.P."/>
            <person name="de Bono B."/>
            <person name="Della Gatta G."/>
            <person name="di Bernardo D."/>
            <person name="Down T."/>
            <person name="Engstrom P."/>
            <person name="Fagiolini M."/>
            <person name="Faulkner G."/>
            <person name="Fletcher C.F."/>
            <person name="Fukushima T."/>
            <person name="Furuno M."/>
            <person name="Futaki S."/>
            <person name="Gariboldi M."/>
            <person name="Georgii-Hemming P."/>
            <person name="Gingeras T.R."/>
            <person name="Gojobori T."/>
            <person name="Green R.E."/>
            <person name="Gustincich S."/>
            <person name="Harbers M."/>
            <person name="Hayashi Y."/>
            <person name="Hensch T.K."/>
            <person name="Hirokawa N."/>
            <person name="Hill D."/>
            <person name="Huminiecki L."/>
            <person name="Iacono M."/>
            <person name="Ikeo K."/>
            <person name="Iwama A."/>
            <person name="Ishikawa T."/>
            <person name="Jakt M."/>
            <person name="Kanapin A."/>
            <person name="Katoh M."/>
            <person name="Kawasawa Y."/>
            <person name="Kelso J."/>
            <person name="Kitamura H."/>
            <person name="Kitano H."/>
            <person name="Kollias G."/>
            <person name="Krishnan S.P."/>
            <person name="Kruger A."/>
            <person name="Kummerfeld S.K."/>
            <person name="Kurochkin I.V."/>
            <person name="Lareau L.F."/>
            <person name="Lazarevic D."/>
            <person name="Lipovich L."/>
            <person name="Liu J."/>
            <person name="Liuni S."/>
            <person name="McWilliam S."/>
            <person name="Madan Babu M."/>
            <person name="Madera M."/>
            <person name="Marchionni L."/>
            <person name="Matsuda H."/>
            <person name="Matsuzawa S."/>
            <person name="Miki H."/>
            <person name="Mignone F."/>
            <person name="Miyake S."/>
            <person name="Morris K."/>
            <person name="Mottagui-Tabar S."/>
            <person name="Mulder N."/>
            <person name="Nakano N."/>
            <person name="Nakauchi H."/>
            <person name="Ng P."/>
            <person name="Nilsson R."/>
            <person name="Nishiguchi S."/>
            <person name="Nishikawa S."/>
            <person name="Nori F."/>
            <person name="Ohara O."/>
            <person name="Okazaki Y."/>
            <person name="Orlando V."/>
            <person name="Pang K.C."/>
            <person name="Pavan W.J."/>
            <person name="Pavesi G."/>
            <person name="Pesole G."/>
            <person name="Petrovsky N."/>
            <person name="Piazza S."/>
            <person name="Reed J."/>
            <person name="Reid J.F."/>
            <person name="Ring B.Z."/>
            <person name="Ringwald M."/>
            <person name="Rost B."/>
            <person name="Ruan Y."/>
            <person name="Salzberg S.L."/>
            <person name="Sandelin A."/>
            <person name="Schneider C."/>
            <person name="Schoenbach C."/>
            <person name="Sekiguchi K."/>
            <person name="Semple C.A."/>
            <person name="Seno S."/>
            <person name="Sessa L."/>
            <person name="Sheng Y."/>
            <person name="Shibata Y."/>
            <person name="Shimada H."/>
            <person name="Shimada K."/>
            <person name="Silva D."/>
            <person name="Sinclair B."/>
            <person name="Sperling S."/>
            <person name="Stupka E."/>
            <person name="Sugiura K."/>
            <person name="Sultana R."/>
            <person name="Takenaka Y."/>
            <person name="Taki K."/>
            <person name="Tammoja K."/>
            <person name="Tan S.L."/>
            <person name="Tang S."/>
            <person name="Taylor M.S."/>
            <person name="Tegner J."/>
            <person name="Teichmann S.A."/>
            <person name="Ueda H.R."/>
            <person name="van Nimwegen E."/>
            <person name="Verardo R."/>
            <person name="Wei C.L."/>
            <person name="Yagi K."/>
            <person name="Yamanishi H."/>
            <person name="Zabarovsky E."/>
            <person name="Zhu S."/>
            <person name="Zimmer A."/>
            <person name="Hide W."/>
            <person name="Bult C."/>
            <person name="Grimmond S.M."/>
            <person name="Teasdale R.D."/>
            <person name="Liu E.T."/>
            <person name="Brusic V."/>
            <person name="Quackenbush J."/>
            <person name="Wahlestedt C."/>
            <person name="Mattick J.S."/>
            <person name="Hume D.A."/>
            <person name="Kai C."/>
            <person name="Sasaki D."/>
            <person name="Tomaru Y."/>
            <person name="Fukuda S."/>
            <person name="Kanamori-Katayama M."/>
            <person name="Suzuki M."/>
            <person name="Aoki J."/>
            <person name="Arakawa T."/>
            <person name="Iida J."/>
            <person name="Imamura K."/>
            <person name="Itoh M."/>
            <person name="Kato T."/>
            <person name="Kawaji H."/>
            <person name="Kawagashira N."/>
            <person name="Kawashima T."/>
            <person name="Kojima M."/>
            <person name="Kondo S."/>
            <person name="Konno H."/>
            <person name="Nakano K."/>
            <person name="Ninomiya N."/>
            <person name="Nishio T."/>
            <person name="Okada M."/>
            <person name="Plessy C."/>
            <person name="Shibata K."/>
            <person name="Shiraki T."/>
            <person name="Suzuki S."/>
            <person name="Tagami M."/>
            <person name="Waki K."/>
            <person name="Watahiki A."/>
            <person name="Okamura-Oho Y."/>
            <person name="Suzuki H."/>
            <person name="Kawai J."/>
            <person name="Hayashizaki Y."/>
        </authorList>
    </citation>
    <scope>NUCLEOTIDE SEQUENCE [LARGE SCALE MRNA]</scope>
    <source>
        <strain>C57BL/6J</strain>
        <tissue>Testis</tissue>
    </source>
</reference>
<reference key="2">
    <citation type="journal article" date="2009" name="PLoS Biol.">
        <title>Lineage-specific biology revealed by a finished genome assembly of the mouse.</title>
        <authorList>
            <person name="Church D.M."/>
            <person name="Goodstadt L."/>
            <person name="Hillier L.W."/>
            <person name="Zody M.C."/>
            <person name="Goldstein S."/>
            <person name="She X."/>
            <person name="Bult C.J."/>
            <person name="Agarwala R."/>
            <person name="Cherry J.L."/>
            <person name="DiCuccio M."/>
            <person name="Hlavina W."/>
            <person name="Kapustin Y."/>
            <person name="Meric P."/>
            <person name="Maglott D."/>
            <person name="Birtle Z."/>
            <person name="Marques A.C."/>
            <person name="Graves T."/>
            <person name="Zhou S."/>
            <person name="Teague B."/>
            <person name="Potamousis K."/>
            <person name="Churas C."/>
            <person name="Place M."/>
            <person name="Herschleb J."/>
            <person name="Runnheim R."/>
            <person name="Forrest D."/>
            <person name="Amos-Landgraf J."/>
            <person name="Schwartz D.C."/>
            <person name="Cheng Z."/>
            <person name="Lindblad-Toh K."/>
            <person name="Eichler E.E."/>
            <person name="Ponting C.P."/>
        </authorList>
    </citation>
    <scope>NUCLEOTIDE SEQUENCE [LARGE SCALE GENOMIC DNA]</scope>
    <source>
        <strain>C57BL/6J</strain>
    </source>
</reference>
<reference key="3">
    <citation type="journal article" date="2017" name="J. Immunol.">
        <title>Identification of IL-40, a novel B cell-associated cytokine.</title>
        <authorList>
            <person name="Catalan-Dibene J."/>
            <person name="Vazquez M.I."/>
            <person name="Luu V.P."/>
            <person name="Nuccio S.P."/>
            <person name="Karimzadeh A."/>
            <person name="Kastenschmidt J.M."/>
            <person name="Villalta S.A."/>
            <person name="Ushach I."/>
            <person name="Pone E.J."/>
            <person name="Casali P."/>
            <person name="Raffatellu M."/>
            <person name="Burkhardt A.M."/>
            <person name="Hernandez-Ruiz M."/>
            <person name="Heller G."/>
            <person name="Hevezi P.A."/>
            <person name="Zlotnik A."/>
        </authorList>
    </citation>
    <scope>FUNCTION</scope>
    <scope>TISSUE SPECIFICITY</scope>
    <scope>DISRUPTION PHENOTYPE</scope>
    <scope>INDUCTION</scope>
</reference>
<feature type="signal peptide" evidence="2">
    <location>
        <begin position="1"/>
        <end position="18"/>
    </location>
</feature>
<feature type="chain" id="PRO_0000272655" description="Protein IL-40">
    <location>
        <begin position="19"/>
        <end position="252"/>
    </location>
</feature>
<feature type="glycosylation site" description="N-linked (GlcNAc...) asparagine" evidence="2">
    <location>
        <position position="82"/>
    </location>
</feature>
<feature type="glycosylation site" description="N-linked (GlcNAc...) asparagine" evidence="2">
    <location>
        <position position="177"/>
    </location>
</feature>
<sequence>MALLQLLLFAMLAACGFSEEQTEGITIAYKVLEVYPQSRRVLITCDAPEASQPITYSLLASRGILVAKKVVHDSVPASFNINITIKSSPDLLTYSCQATSNSGTYGPSSRLQMYQELWAKPVSQLQADFVLRHGDSGPTVELSCLASSGSPPITYRLVGNGGRVLAQQRPLHGKPANFSLPLSQTTGWFQCEAENDVGVDSSARIPLPRAEARAKLVTTLAGELPLTPTCILAGSLVSIAVIASRMLSSTGL</sequence>
<organism>
    <name type="scientific">Mus musculus</name>
    <name type="common">Mouse</name>
    <dbReference type="NCBI Taxonomy" id="10090"/>
    <lineage>
        <taxon>Eukaryota</taxon>
        <taxon>Metazoa</taxon>
        <taxon>Chordata</taxon>
        <taxon>Craniata</taxon>
        <taxon>Vertebrata</taxon>
        <taxon>Euteleostomi</taxon>
        <taxon>Mammalia</taxon>
        <taxon>Eutheria</taxon>
        <taxon>Euarchontoglires</taxon>
        <taxon>Glires</taxon>
        <taxon>Rodentia</taxon>
        <taxon>Myomorpha</taxon>
        <taxon>Muroidea</taxon>
        <taxon>Muridae</taxon>
        <taxon>Murinae</taxon>
        <taxon>Mus</taxon>
        <taxon>Mus</taxon>
    </lineage>
</organism>
<protein>
    <recommendedName>
        <fullName evidence="5">Protein IL-40</fullName>
    </recommendedName>
    <alternativeName>
        <fullName evidence="4">Interleukin-40</fullName>
        <shortName evidence="4">IL-40</shortName>
    </alternativeName>
</protein>
<accession>Q9CX63</accession>
<accession>B1ATC1</accession>
<name>IL40_MOUSE</name>
<proteinExistence type="evidence at transcript level"/>
<comment type="function">
    <text evidence="3">Probable B cell-associated cytokine that plays a role in the regulation of humoral immune responses (PubMed:28978694). Involved in lymphocyte B cell development and immunoglobulin/IgA production (PubMed:28978694).</text>
</comment>
<comment type="subcellular location">
    <subcellularLocation>
        <location evidence="1">Secreted</location>
    </subcellularLocation>
</comment>
<comment type="tissue specificity">
    <text evidence="3">Expressed in bone marrow, spleen and lymph node (PubMed:28978694).</text>
</comment>
<comment type="induction">
    <text evidence="3">Up-regulated in the mammary gland upon the onset of lactation (PubMed:28978694). Up-regulated in peripheral blood lymphocyte B cells upon activation (PubMed:28978694).</text>
</comment>
<comment type="disruption phenotype">
    <text evidence="3">Mice are viable and reproduce normally (PubMed:28978694). Show reduced number of both peripheral lymphocyte B cells in the spleen and precursor and mature lymphocyte B cells in the bone marrow (PubMed:28978694). Show smaller and fewer Peyer's patches, lower numbers of immunoglobulin/IgA-secreting B cells and an altered gut microbiome (PubMed:28978694). Exhibit reduced levels of immunoglobulin/IgA in the serum, gut, feces, and lactating mammary gland (PubMed:28978694).</text>
</comment>